<organism>
    <name type="scientific">Borrelia garinii subsp. bavariensis (strain ATCC BAA-2496 / DSM 23469 / PBi)</name>
    <name type="common">Borreliella bavariensis</name>
    <dbReference type="NCBI Taxonomy" id="290434"/>
    <lineage>
        <taxon>Bacteria</taxon>
        <taxon>Pseudomonadati</taxon>
        <taxon>Spirochaetota</taxon>
        <taxon>Spirochaetia</taxon>
        <taxon>Spirochaetales</taxon>
        <taxon>Borreliaceae</taxon>
        <taxon>Borreliella</taxon>
    </lineage>
</organism>
<proteinExistence type="inferred from homology"/>
<evidence type="ECO:0000255" key="1">
    <source>
        <dbReference type="HAMAP-Rule" id="MF_00031"/>
    </source>
</evidence>
<dbReference type="EMBL" id="CP000013">
    <property type="protein sequence ID" value="AAU06882.1"/>
    <property type="molecule type" value="Genomic_DNA"/>
</dbReference>
<dbReference type="RefSeq" id="WP_011193377.1">
    <property type="nucleotide sequence ID" value="NZ_CP028872.1"/>
</dbReference>
<dbReference type="SMR" id="Q662Y9"/>
<dbReference type="GeneID" id="45160822"/>
<dbReference type="KEGG" id="bga:BG0023"/>
<dbReference type="eggNOG" id="COG0632">
    <property type="taxonomic scope" value="Bacteria"/>
</dbReference>
<dbReference type="HOGENOM" id="CLU_087936_2_0_12"/>
<dbReference type="OrthoDB" id="5293449at2"/>
<dbReference type="Proteomes" id="UP000002276">
    <property type="component" value="Chromosome"/>
</dbReference>
<dbReference type="GO" id="GO:0005737">
    <property type="term" value="C:cytoplasm"/>
    <property type="evidence" value="ECO:0007669"/>
    <property type="project" value="UniProtKB-SubCell"/>
</dbReference>
<dbReference type="GO" id="GO:0048476">
    <property type="term" value="C:Holliday junction resolvase complex"/>
    <property type="evidence" value="ECO:0007669"/>
    <property type="project" value="UniProtKB-UniRule"/>
</dbReference>
<dbReference type="GO" id="GO:0005524">
    <property type="term" value="F:ATP binding"/>
    <property type="evidence" value="ECO:0007669"/>
    <property type="project" value="InterPro"/>
</dbReference>
<dbReference type="GO" id="GO:0000400">
    <property type="term" value="F:four-way junction DNA binding"/>
    <property type="evidence" value="ECO:0007669"/>
    <property type="project" value="UniProtKB-UniRule"/>
</dbReference>
<dbReference type="GO" id="GO:0009378">
    <property type="term" value="F:four-way junction helicase activity"/>
    <property type="evidence" value="ECO:0007669"/>
    <property type="project" value="InterPro"/>
</dbReference>
<dbReference type="GO" id="GO:0006310">
    <property type="term" value="P:DNA recombination"/>
    <property type="evidence" value="ECO:0007669"/>
    <property type="project" value="UniProtKB-UniRule"/>
</dbReference>
<dbReference type="GO" id="GO:0006281">
    <property type="term" value="P:DNA repair"/>
    <property type="evidence" value="ECO:0007669"/>
    <property type="project" value="UniProtKB-UniRule"/>
</dbReference>
<dbReference type="Gene3D" id="1.10.150.20">
    <property type="entry name" value="5' to 3' exonuclease, C-terminal subdomain"/>
    <property type="match status" value="1"/>
</dbReference>
<dbReference type="Gene3D" id="2.40.50.140">
    <property type="entry name" value="Nucleic acid-binding proteins"/>
    <property type="match status" value="1"/>
</dbReference>
<dbReference type="HAMAP" id="MF_00031">
    <property type="entry name" value="DNA_HJ_migration_RuvA"/>
    <property type="match status" value="1"/>
</dbReference>
<dbReference type="InterPro" id="IPR013849">
    <property type="entry name" value="DNA_helicase_Holl-junc_RuvA_I"/>
</dbReference>
<dbReference type="InterPro" id="IPR003583">
    <property type="entry name" value="Hlx-hairpin-Hlx_DNA-bd_motif"/>
</dbReference>
<dbReference type="InterPro" id="IPR012340">
    <property type="entry name" value="NA-bd_OB-fold"/>
</dbReference>
<dbReference type="InterPro" id="IPR000085">
    <property type="entry name" value="RuvA"/>
</dbReference>
<dbReference type="InterPro" id="IPR010994">
    <property type="entry name" value="RuvA_2-like"/>
</dbReference>
<dbReference type="NCBIfam" id="TIGR00084">
    <property type="entry name" value="ruvA"/>
    <property type="match status" value="1"/>
</dbReference>
<dbReference type="Pfam" id="PF14520">
    <property type="entry name" value="HHH_5"/>
    <property type="match status" value="1"/>
</dbReference>
<dbReference type="Pfam" id="PF01330">
    <property type="entry name" value="RuvA_N"/>
    <property type="match status" value="1"/>
</dbReference>
<dbReference type="SMART" id="SM00278">
    <property type="entry name" value="HhH1"/>
    <property type="match status" value="2"/>
</dbReference>
<dbReference type="SUPFAM" id="SSF50249">
    <property type="entry name" value="Nucleic acid-binding proteins"/>
    <property type="match status" value="1"/>
</dbReference>
<dbReference type="SUPFAM" id="SSF47781">
    <property type="entry name" value="RuvA domain 2-like"/>
    <property type="match status" value="1"/>
</dbReference>
<comment type="function">
    <text evidence="1">The RuvA-RuvB-RuvC complex processes Holliday junction (HJ) DNA during genetic recombination and DNA repair, while the RuvA-RuvB complex plays an important role in the rescue of blocked DNA replication forks via replication fork reversal (RFR). RuvA specifically binds to HJ cruciform DNA, conferring on it an open structure. The RuvB hexamer acts as an ATP-dependent pump, pulling dsDNA into and through the RuvAB complex. HJ branch migration allows RuvC to scan DNA until it finds its consensus sequence, where it cleaves and resolves the cruciform DNA.</text>
</comment>
<comment type="subunit">
    <text evidence="1">Homotetramer. Forms an RuvA(8)-RuvB(12)-Holliday junction (HJ) complex. HJ DNA is sandwiched between 2 RuvA tetramers; dsDNA enters through RuvA and exits via RuvB. An RuvB hexamer assembles on each DNA strand where it exits the tetramer. Each RuvB hexamer is contacted by two RuvA subunits (via domain III) on 2 adjacent RuvB subunits; this complex drives branch migration. In the full resolvosome a probable DNA-RuvA(4)-RuvB(12)-RuvC(2) complex forms which resolves the HJ.</text>
</comment>
<comment type="subcellular location">
    <subcellularLocation>
        <location evidence="1">Cytoplasm</location>
    </subcellularLocation>
</comment>
<comment type="domain">
    <text evidence="1">Has three domains with a flexible linker between the domains II and III and assumes an 'L' shape. Domain III is highly mobile and contacts RuvB.</text>
</comment>
<comment type="similarity">
    <text evidence="1">Belongs to the RuvA family.</text>
</comment>
<feature type="chain" id="PRO_0000224847" description="Holliday junction branch migration complex subunit RuvA">
    <location>
        <begin position="1"/>
        <end position="196"/>
    </location>
</feature>
<feature type="region of interest" description="Domain I" evidence="1">
    <location>
        <begin position="1"/>
        <end position="63"/>
    </location>
</feature>
<feature type="region of interest" description="Domain II" evidence="1">
    <location>
        <begin position="64"/>
        <end position="139"/>
    </location>
</feature>
<feature type="region of interest" description="Domain III" evidence="1">
    <location>
        <begin position="139"/>
        <end position="196"/>
    </location>
</feature>
<feature type="region of interest" description="Flexible linker" evidence="1">
    <location>
        <position position="139"/>
    </location>
</feature>
<keyword id="KW-0963">Cytoplasm</keyword>
<keyword id="KW-0227">DNA damage</keyword>
<keyword id="KW-0233">DNA recombination</keyword>
<keyword id="KW-0234">DNA repair</keyword>
<keyword id="KW-0238">DNA-binding</keyword>
<accession>Q662Y9</accession>
<reference key="1">
    <citation type="journal article" date="2004" name="Nucleic Acids Res.">
        <title>Comparative analysis of the Borrelia garinii genome.</title>
        <authorList>
            <person name="Gloeckner G."/>
            <person name="Lehmann R."/>
            <person name="Romualdi A."/>
            <person name="Pradella S."/>
            <person name="Schulte-Spechtel U."/>
            <person name="Schilhabel M."/>
            <person name="Wilske B."/>
            <person name="Suehnel J."/>
            <person name="Platzer M."/>
        </authorList>
    </citation>
    <scope>NUCLEOTIDE SEQUENCE [LARGE SCALE GENOMIC DNA]</scope>
    <source>
        <strain>ATCC BAA-2496 / DSM 23469 / PBi</strain>
    </source>
</reference>
<protein>
    <recommendedName>
        <fullName evidence="1">Holliday junction branch migration complex subunit RuvA</fullName>
    </recommendedName>
</protein>
<gene>
    <name evidence="1" type="primary">ruvA</name>
    <name type="ordered locus">BG0023</name>
</gene>
<sequence>MINKIHGKVIEKKESSLVLMTTVFEFELLVSAFCLANFKLSDKVELFTYLYARENELKLFGFLNSDERETFKSLIGVSGIGPRAALRVLSNIRYNDFKEAIDREDVELVSKIKGIGKKMAGKMFLHLQGKLLINNELESSLFGFKELEESIVSMGFDRKIVNSKLKEACDLIEFSNLKDSEKEQFLFKEVLKRMSN</sequence>
<name>RUVA_BORGP</name>